<organism>
    <name type="scientific">Arabidopsis thaliana</name>
    <name type="common">Mouse-ear cress</name>
    <dbReference type="NCBI Taxonomy" id="3702"/>
    <lineage>
        <taxon>Eukaryota</taxon>
        <taxon>Viridiplantae</taxon>
        <taxon>Streptophyta</taxon>
        <taxon>Embryophyta</taxon>
        <taxon>Tracheophyta</taxon>
        <taxon>Spermatophyta</taxon>
        <taxon>Magnoliopsida</taxon>
        <taxon>eudicotyledons</taxon>
        <taxon>Gunneridae</taxon>
        <taxon>Pentapetalae</taxon>
        <taxon>rosids</taxon>
        <taxon>malvids</taxon>
        <taxon>Brassicales</taxon>
        <taxon>Brassicaceae</taxon>
        <taxon>Camelineae</taxon>
        <taxon>Arabidopsis</taxon>
    </lineage>
</organism>
<dbReference type="EMBL" id="AL161577">
    <property type="protein sequence ID" value="CAB79783.1"/>
    <property type="molecule type" value="Genomic_DNA"/>
</dbReference>
<dbReference type="EMBL" id="CP002687">
    <property type="protein sequence ID" value="AEE85790.1"/>
    <property type="molecule type" value="Genomic_DNA"/>
</dbReference>
<dbReference type="EMBL" id="BT010774">
    <property type="protein sequence ID" value="AAR24141.1"/>
    <property type="molecule type" value="mRNA"/>
</dbReference>
<dbReference type="EMBL" id="BT011262">
    <property type="protein sequence ID" value="AAR92298.1"/>
    <property type="molecule type" value="mRNA"/>
</dbReference>
<dbReference type="PIR" id="F85358">
    <property type="entry name" value="F85358"/>
</dbReference>
<dbReference type="RefSeq" id="NP_194794.1">
    <property type="nucleotide sequence ID" value="NM_119211.4"/>
</dbReference>
<dbReference type="SMR" id="Q9M095"/>
<dbReference type="FunCoup" id="Q9M095">
    <property type="interactions" value="93"/>
</dbReference>
<dbReference type="STRING" id="3702.Q9M095"/>
<dbReference type="iPTMnet" id="Q9M095"/>
<dbReference type="PaxDb" id="3702-AT4G30650.1"/>
<dbReference type="ProteomicsDB" id="225951"/>
<dbReference type="EnsemblPlants" id="AT4G30650.1">
    <property type="protein sequence ID" value="AT4G30650.1"/>
    <property type="gene ID" value="AT4G30650"/>
</dbReference>
<dbReference type="GeneID" id="829188"/>
<dbReference type="Gramene" id="AT4G30650.1">
    <property type="protein sequence ID" value="AT4G30650.1"/>
    <property type="gene ID" value="AT4G30650"/>
</dbReference>
<dbReference type="KEGG" id="ath:AT4G30650"/>
<dbReference type="Araport" id="AT4G30650"/>
<dbReference type="TAIR" id="AT4G30650"/>
<dbReference type="eggNOG" id="KOG1773">
    <property type="taxonomic scope" value="Eukaryota"/>
</dbReference>
<dbReference type="HOGENOM" id="CLU_107649_6_0_1"/>
<dbReference type="InParanoid" id="Q9M095"/>
<dbReference type="OMA" id="ESHDYSA"/>
<dbReference type="OrthoDB" id="2802411at2759"/>
<dbReference type="PhylomeDB" id="Q9M095"/>
<dbReference type="PRO" id="PR:Q9M095"/>
<dbReference type="Proteomes" id="UP000006548">
    <property type="component" value="Chromosome 4"/>
</dbReference>
<dbReference type="ExpressionAtlas" id="Q9M095">
    <property type="expression patterns" value="baseline and differential"/>
</dbReference>
<dbReference type="GO" id="GO:0016020">
    <property type="term" value="C:membrane"/>
    <property type="evidence" value="ECO:0007669"/>
    <property type="project" value="UniProtKB-SubCell"/>
</dbReference>
<dbReference type="GO" id="GO:0050832">
    <property type="term" value="P:defense response to fungus"/>
    <property type="evidence" value="ECO:0000270"/>
    <property type="project" value="TAIR"/>
</dbReference>
<dbReference type="InterPro" id="IPR000612">
    <property type="entry name" value="PMP3"/>
</dbReference>
<dbReference type="PANTHER" id="PTHR21659:SF104">
    <property type="entry name" value="GENOME ASSEMBLY, CHROMOSOME: A01"/>
    <property type="match status" value="1"/>
</dbReference>
<dbReference type="PANTHER" id="PTHR21659">
    <property type="entry name" value="HYDROPHOBIC PROTEIN RCI2 LOW TEMPERATURE AND SALT RESPONSIVE PROTEIN LTI6 -RELATED"/>
    <property type="match status" value="1"/>
</dbReference>
<dbReference type="Pfam" id="PF01679">
    <property type="entry name" value="Pmp3"/>
    <property type="match status" value="1"/>
</dbReference>
<dbReference type="PROSITE" id="PS01309">
    <property type="entry name" value="UPF0057"/>
    <property type="match status" value="1"/>
</dbReference>
<name>RC23_ARATH</name>
<keyword id="KW-0472">Membrane</keyword>
<keyword id="KW-1185">Reference proteome</keyword>
<keyword id="KW-0812">Transmembrane</keyword>
<keyword id="KW-1133">Transmembrane helix</keyword>
<gene>
    <name type="ordered locus">At4g30650</name>
    <name type="ORF">F17I23.10</name>
</gene>
<proteinExistence type="inferred from homology"/>
<accession>Q9M095</accession>
<accession>Q6IDS0</accession>
<feature type="chain" id="PRO_0000193976" description="UPF0057 membrane protein At4g30650">
    <location>
        <begin position="1"/>
        <end position="73"/>
    </location>
</feature>
<feature type="transmembrane region" description="Helical" evidence="1">
    <location>
        <begin position="4"/>
        <end position="24"/>
    </location>
</feature>
<feature type="transmembrane region" description="Helical" evidence="1">
    <location>
        <begin position="37"/>
        <end position="57"/>
    </location>
</feature>
<sequence length="73" mass="7906">MASNMEVFCEILIAILLPPLGVCLKRGCCTVEFLICLVLTILGYIPGIIYALYVIVFQNREGSTELGAPLNSA</sequence>
<comment type="subcellular location">
    <subcellularLocation>
        <location evidence="2">Membrane</location>
        <topology evidence="2">Multi-pass membrane protein</topology>
    </subcellularLocation>
</comment>
<comment type="similarity">
    <text evidence="2">Belongs to the UPF0057 (PMP3) family.</text>
</comment>
<evidence type="ECO:0000255" key="1"/>
<evidence type="ECO:0000305" key="2"/>
<protein>
    <recommendedName>
        <fullName>UPF0057 membrane protein At4g30650</fullName>
    </recommendedName>
</protein>
<reference key="1">
    <citation type="journal article" date="1999" name="Nature">
        <title>Sequence and analysis of chromosome 4 of the plant Arabidopsis thaliana.</title>
        <authorList>
            <person name="Mayer K.F.X."/>
            <person name="Schueller C."/>
            <person name="Wambutt R."/>
            <person name="Murphy G."/>
            <person name="Volckaert G."/>
            <person name="Pohl T."/>
            <person name="Duesterhoeft A."/>
            <person name="Stiekema W."/>
            <person name="Entian K.-D."/>
            <person name="Terryn N."/>
            <person name="Harris B."/>
            <person name="Ansorge W."/>
            <person name="Brandt P."/>
            <person name="Grivell L.A."/>
            <person name="Rieger M."/>
            <person name="Weichselgartner M."/>
            <person name="de Simone V."/>
            <person name="Obermaier B."/>
            <person name="Mache R."/>
            <person name="Mueller M."/>
            <person name="Kreis M."/>
            <person name="Delseny M."/>
            <person name="Puigdomenech P."/>
            <person name="Watson M."/>
            <person name="Schmidtheini T."/>
            <person name="Reichert B."/>
            <person name="Portetelle D."/>
            <person name="Perez-Alonso M."/>
            <person name="Boutry M."/>
            <person name="Bancroft I."/>
            <person name="Vos P."/>
            <person name="Hoheisel J."/>
            <person name="Zimmermann W."/>
            <person name="Wedler H."/>
            <person name="Ridley P."/>
            <person name="Langham S.-A."/>
            <person name="McCullagh B."/>
            <person name="Bilham L."/>
            <person name="Robben J."/>
            <person name="van der Schueren J."/>
            <person name="Grymonprez B."/>
            <person name="Chuang Y.-J."/>
            <person name="Vandenbussche F."/>
            <person name="Braeken M."/>
            <person name="Weltjens I."/>
            <person name="Voet M."/>
            <person name="Bastiaens I."/>
            <person name="Aert R."/>
            <person name="Defoor E."/>
            <person name="Weitzenegger T."/>
            <person name="Bothe G."/>
            <person name="Ramsperger U."/>
            <person name="Hilbert H."/>
            <person name="Braun M."/>
            <person name="Holzer E."/>
            <person name="Brandt A."/>
            <person name="Peters S."/>
            <person name="van Staveren M."/>
            <person name="Dirkse W."/>
            <person name="Mooijman P."/>
            <person name="Klein Lankhorst R."/>
            <person name="Rose M."/>
            <person name="Hauf J."/>
            <person name="Koetter P."/>
            <person name="Berneiser S."/>
            <person name="Hempel S."/>
            <person name="Feldpausch M."/>
            <person name="Lamberth S."/>
            <person name="Van den Daele H."/>
            <person name="De Keyser A."/>
            <person name="Buysshaert C."/>
            <person name="Gielen J."/>
            <person name="Villarroel R."/>
            <person name="De Clercq R."/>
            <person name="van Montagu M."/>
            <person name="Rogers J."/>
            <person name="Cronin A."/>
            <person name="Quail M.A."/>
            <person name="Bray-Allen S."/>
            <person name="Clark L."/>
            <person name="Doggett J."/>
            <person name="Hall S."/>
            <person name="Kay M."/>
            <person name="Lennard N."/>
            <person name="McLay K."/>
            <person name="Mayes R."/>
            <person name="Pettett A."/>
            <person name="Rajandream M.A."/>
            <person name="Lyne M."/>
            <person name="Benes V."/>
            <person name="Rechmann S."/>
            <person name="Borkova D."/>
            <person name="Bloecker H."/>
            <person name="Scharfe M."/>
            <person name="Grimm M."/>
            <person name="Loehnert T.-H."/>
            <person name="Dose S."/>
            <person name="de Haan M."/>
            <person name="Maarse A.C."/>
            <person name="Schaefer M."/>
            <person name="Mueller-Auer S."/>
            <person name="Gabel C."/>
            <person name="Fuchs M."/>
            <person name="Fartmann B."/>
            <person name="Granderath K."/>
            <person name="Dauner D."/>
            <person name="Herzl A."/>
            <person name="Neumann S."/>
            <person name="Argiriou A."/>
            <person name="Vitale D."/>
            <person name="Liguori R."/>
            <person name="Piravandi E."/>
            <person name="Massenet O."/>
            <person name="Quigley F."/>
            <person name="Clabauld G."/>
            <person name="Muendlein A."/>
            <person name="Felber R."/>
            <person name="Schnabl S."/>
            <person name="Hiller R."/>
            <person name="Schmidt W."/>
            <person name="Lecharny A."/>
            <person name="Aubourg S."/>
            <person name="Chefdor F."/>
            <person name="Cooke R."/>
            <person name="Berger C."/>
            <person name="Monfort A."/>
            <person name="Casacuberta E."/>
            <person name="Gibbons T."/>
            <person name="Weber N."/>
            <person name="Vandenbol M."/>
            <person name="Bargues M."/>
            <person name="Terol J."/>
            <person name="Torres A."/>
            <person name="Perez-Perez A."/>
            <person name="Purnelle B."/>
            <person name="Bent E."/>
            <person name="Johnson S."/>
            <person name="Tacon D."/>
            <person name="Jesse T."/>
            <person name="Heijnen L."/>
            <person name="Schwarz S."/>
            <person name="Scholler P."/>
            <person name="Heber S."/>
            <person name="Francs P."/>
            <person name="Bielke C."/>
            <person name="Frishman D."/>
            <person name="Haase D."/>
            <person name="Lemcke K."/>
            <person name="Mewes H.-W."/>
            <person name="Stocker S."/>
            <person name="Zaccaria P."/>
            <person name="Bevan M."/>
            <person name="Wilson R.K."/>
            <person name="de la Bastide M."/>
            <person name="Habermann K."/>
            <person name="Parnell L."/>
            <person name="Dedhia N."/>
            <person name="Gnoj L."/>
            <person name="Schutz K."/>
            <person name="Huang E."/>
            <person name="Spiegel L."/>
            <person name="Sekhon M."/>
            <person name="Murray J."/>
            <person name="Sheet P."/>
            <person name="Cordes M."/>
            <person name="Abu-Threideh J."/>
            <person name="Stoneking T."/>
            <person name="Kalicki J."/>
            <person name="Graves T."/>
            <person name="Harmon G."/>
            <person name="Edwards J."/>
            <person name="Latreille P."/>
            <person name="Courtney L."/>
            <person name="Cloud J."/>
            <person name="Abbott A."/>
            <person name="Scott K."/>
            <person name="Johnson D."/>
            <person name="Minx P."/>
            <person name="Bentley D."/>
            <person name="Fulton B."/>
            <person name="Miller N."/>
            <person name="Greco T."/>
            <person name="Kemp K."/>
            <person name="Kramer J."/>
            <person name="Fulton L."/>
            <person name="Mardis E."/>
            <person name="Dante M."/>
            <person name="Pepin K."/>
            <person name="Hillier L.W."/>
            <person name="Nelson J."/>
            <person name="Spieth J."/>
            <person name="Ryan E."/>
            <person name="Andrews S."/>
            <person name="Geisel C."/>
            <person name="Layman D."/>
            <person name="Du H."/>
            <person name="Ali J."/>
            <person name="Berghoff A."/>
            <person name="Jones K."/>
            <person name="Drone K."/>
            <person name="Cotton M."/>
            <person name="Joshu C."/>
            <person name="Antonoiu B."/>
            <person name="Zidanic M."/>
            <person name="Strong C."/>
            <person name="Sun H."/>
            <person name="Lamar B."/>
            <person name="Yordan C."/>
            <person name="Ma P."/>
            <person name="Zhong J."/>
            <person name="Preston R."/>
            <person name="Vil D."/>
            <person name="Shekher M."/>
            <person name="Matero A."/>
            <person name="Shah R."/>
            <person name="Swaby I.K."/>
            <person name="O'Shaughnessy A."/>
            <person name="Rodriguez M."/>
            <person name="Hoffman J."/>
            <person name="Till S."/>
            <person name="Granat S."/>
            <person name="Shohdy N."/>
            <person name="Hasegawa A."/>
            <person name="Hameed A."/>
            <person name="Lodhi M."/>
            <person name="Johnson A."/>
            <person name="Chen E."/>
            <person name="Marra M.A."/>
            <person name="Martienssen R."/>
            <person name="McCombie W.R."/>
        </authorList>
    </citation>
    <scope>NUCLEOTIDE SEQUENCE [LARGE SCALE GENOMIC DNA]</scope>
    <source>
        <strain>cv. Columbia</strain>
    </source>
</reference>
<reference key="2">
    <citation type="journal article" date="2017" name="Plant J.">
        <title>Araport11: a complete reannotation of the Arabidopsis thaliana reference genome.</title>
        <authorList>
            <person name="Cheng C.Y."/>
            <person name="Krishnakumar V."/>
            <person name="Chan A.P."/>
            <person name="Thibaud-Nissen F."/>
            <person name="Schobel S."/>
            <person name="Town C.D."/>
        </authorList>
    </citation>
    <scope>GENOME REANNOTATION</scope>
    <source>
        <strain>cv. Columbia</strain>
    </source>
</reference>
<reference key="3">
    <citation type="submission" date="2004-01" db="EMBL/GenBank/DDBJ databases">
        <title>Arabidopsis ORF clones.</title>
        <authorList>
            <person name="Cheuk R.F."/>
            <person name="Chen H."/>
            <person name="Kim C.J."/>
            <person name="Shinn P."/>
            <person name="Ecker J.R."/>
        </authorList>
    </citation>
    <scope>NUCLEOTIDE SEQUENCE [LARGE SCALE MRNA]</scope>
    <source>
        <strain>cv. Columbia</strain>
    </source>
</reference>